<proteinExistence type="predicted"/>
<evidence type="ECO:0000255" key="1">
    <source>
        <dbReference type="PROSITE-ProRule" id="PRU00037"/>
    </source>
</evidence>
<evidence type="ECO:0000256" key="2">
    <source>
        <dbReference type="SAM" id="MobiDB-lite"/>
    </source>
</evidence>
<evidence type="ECO:0000305" key="3"/>
<evidence type="ECO:0000312" key="4">
    <source>
        <dbReference type="EMBL" id="AAF57972.2"/>
    </source>
</evidence>
<feature type="chain" id="PRO_0000186220" description="Serine-enriched protein">
    <location>
        <begin position="1"/>
        <end position="1302"/>
    </location>
</feature>
<feature type="domain" description="BTB" evidence="1 3">
    <location>
        <begin position="40"/>
        <end position="158"/>
    </location>
</feature>
<feature type="region of interest" description="Disordered" evidence="2">
    <location>
        <begin position="325"/>
        <end position="532"/>
    </location>
</feature>
<feature type="region of interest" description="Disordered" evidence="2">
    <location>
        <begin position="575"/>
        <end position="624"/>
    </location>
</feature>
<feature type="region of interest" description="Disordered" evidence="2">
    <location>
        <begin position="648"/>
        <end position="685"/>
    </location>
</feature>
<feature type="region of interest" description="Disordered" evidence="2">
    <location>
        <begin position="701"/>
        <end position="752"/>
    </location>
</feature>
<feature type="region of interest" description="Disordered" evidence="2">
    <location>
        <begin position="834"/>
        <end position="858"/>
    </location>
</feature>
<feature type="region of interest" description="Disordered" evidence="2">
    <location>
        <begin position="1045"/>
        <end position="1090"/>
    </location>
</feature>
<feature type="region of interest" description="Disordered" evidence="2">
    <location>
        <begin position="1102"/>
        <end position="1163"/>
    </location>
</feature>
<feature type="region of interest" description="Disordered" evidence="2">
    <location>
        <begin position="1187"/>
        <end position="1252"/>
    </location>
</feature>
<feature type="compositionally biased region" description="Basic residues" evidence="2">
    <location>
        <begin position="337"/>
        <end position="364"/>
    </location>
</feature>
<feature type="compositionally biased region" description="Polar residues" evidence="2">
    <location>
        <begin position="378"/>
        <end position="388"/>
    </location>
</feature>
<feature type="compositionally biased region" description="Polar residues" evidence="2">
    <location>
        <begin position="410"/>
        <end position="430"/>
    </location>
</feature>
<feature type="compositionally biased region" description="Polar residues" evidence="2">
    <location>
        <begin position="437"/>
        <end position="449"/>
    </location>
</feature>
<feature type="compositionally biased region" description="Polar residues" evidence="2">
    <location>
        <begin position="472"/>
        <end position="487"/>
    </location>
</feature>
<feature type="compositionally biased region" description="Basic and acidic residues" evidence="2">
    <location>
        <begin position="589"/>
        <end position="623"/>
    </location>
</feature>
<feature type="compositionally biased region" description="Low complexity" evidence="2">
    <location>
        <begin position="664"/>
        <end position="680"/>
    </location>
</feature>
<feature type="compositionally biased region" description="Basic and acidic residues" evidence="2">
    <location>
        <begin position="713"/>
        <end position="723"/>
    </location>
</feature>
<feature type="compositionally biased region" description="Polar residues" evidence="2">
    <location>
        <begin position="736"/>
        <end position="748"/>
    </location>
</feature>
<feature type="compositionally biased region" description="Basic and acidic residues" evidence="2">
    <location>
        <begin position="836"/>
        <end position="855"/>
    </location>
</feature>
<feature type="compositionally biased region" description="Low complexity" evidence="2">
    <location>
        <begin position="1047"/>
        <end position="1056"/>
    </location>
</feature>
<feature type="compositionally biased region" description="Low complexity" evidence="2">
    <location>
        <begin position="1107"/>
        <end position="1128"/>
    </location>
</feature>
<feature type="compositionally biased region" description="Polar residues" evidence="2">
    <location>
        <begin position="1187"/>
        <end position="1207"/>
    </location>
</feature>
<feature type="compositionally biased region" description="Low complexity" evidence="2">
    <location>
        <begin position="1226"/>
        <end position="1252"/>
    </location>
</feature>
<feature type="sequence conflict" description="In Ref. 3; AAD09150." evidence="3" ref="3">
    <original>E</original>
    <variation>D</variation>
    <location>
        <position position="691"/>
    </location>
</feature>
<feature type="sequence conflict" description="In Ref. 3; AAD09150." evidence="3" ref="3">
    <original>Q</original>
    <variation>H</variation>
    <location>
        <position position="744"/>
    </location>
</feature>
<feature type="sequence conflict" description="In Ref. 3; AAD09150." evidence="3" ref="3">
    <original>D</original>
    <variation>V</variation>
    <location>
        <position position="788"/>
    </location>
</feature>
<feature type="sequence conflict" description="In Ref. 3; AAD09150." evidence="3" ref="3">
    <original>Q</original>
    <variation>L</variation>
    <location>
        <position position="808"/>
    </location>
</feature>
<feature type="sequence conflict" description="In Ref. 3; AAD09150." evidence="3" ref="3">
    <original>D</original>
    <variation>V</variation>
    <location>
        <position position="894"/>
    </location>
</feature>
<feature type="sequence conflict" description="In Ref. 3; AAD09150." evidence="3" ref="3">
    <original>R</original>
    <variation>G</variation>
    <location>
        <position position="1167"/>
    </location>
</feature>
<feature type="sequence conflict" description="In Ref. 3; AAD09150." evidence="3" ref="3">
    <original>S</original>
    <variation>N</variation>
    <location>
        <position position="1301"/>
    </location>
</feature>
<protein>
    <recommendedName>
        <fullName>Serine-enriched protein</fullName>
    </recommendedName>
</protein>
<keyword id="KW-1185">Reference proteome</keyword>
<accession>O61366</accession>
<accession>Q9V7S2</accession>
<gene>
    <name type="primary">gprs</name>
    <name type="ORF">CG18471</name>
</gene>
<name>GPRS_DROME</name>
<organism evidence="4">
    <name type="scientific">Drosophila melanogaster</name>
    <name type="common">Fruit fly</name>
    <dbReference type="NCBI Taxonomy" id="7227"/>
    <lineage>
        <taxon>Eukaryota</taxon>
        <taxon>Metazoa</taxon>
        <taxon>Ecdysozoa</taxon>
        <taxon>Arthropoda</taxon>
        <taxon>Hexapoda</taxon>
        <taxon>Insecta</taxon>
        <taxon>Pterygota</taxon>
        <taxon>Neoptera</taxon>
        <taxon>Endopterygota</taxon>
        <taxon>Diptera</taxon>
        <taxon>Brachycera</taxon>
        <taxon>Muscomorpha</taxon>
        <taxon>Ephydroidea</taxon>
        <taxon>Drosophilidae</taxon>
        <taxon>Drosophila</taxon>
        <taxon>Sophophora</taxon>
    </lineage>
</organism>
<reference evidence="3" key="1">
    <citation type="journal article" date="2000" name="Science">
        <title>The genome sequence of Drosophila melanogaster.</title>
        <authorList>
            <person name="Adams M.D."/>
            <person name="Celniker S.E."/>
            <person name="Holt R.A."/>
            <person name="Evans C.A."/>
            <person name="Gocayne J.D."/>
            <person name="Amanatides P.G."/>
            <person name="Scherer S.E."/>
            <person name="Li P.W."/>
            <person name="Hoskins R.A."/>
            <person name="Galle R.F."/>
            <person name="George R.A."/>
            <person name="Lewis S.E."/>
            <person name="Richards S."/>
            <person name="Ashburner M."/>
            <person name="Henderson S.N."/>
            <person name="Sutton G.G."/>
            <person name="Wortman J.R."/>
            <person name="Yandell M.D."/>
            <person name="Zhang Q."/>
            <person name="Chen L.X."/>
            <person name="Brandon R.C."/>
            <person name="Rogers Y.-H.C."/>
            <person name="Blazej R.G."/>
            <person name="Champe M."/>
            <person name="Pfeiffer B.D."/>
            <person name="Wan K.H."/>
            <person name="Doyle C."/>
            <person name="Baxter E.G."/>
            <person name="Helt G."/>
            <person name="Nelson C.R."/>
            <person name="Miklos G.L.G."/>
            <person name="Abril J.F."/>
            <person name="Agbayani A."/>
            <person name="An H.-J."/>
            <person name="Andrews-Pfannkoch C."/>
            <person name="Baldwin D."/>
            <person name="Ballew R.M."/>
            <person name="Basu A."/>
            <person name="Baxendale J."/>
            <person name="Bayraktaroglu L."/>
            <person name="Beasley E.M."/>
            <person name="Beeson K.Y."/>
            <person name="Benos P.V."/>
            <person name="Berman B.P."/>
            <person name="Bhandari D."/>
            <person name="Bolshakov S."/>
            <person name="Borkova D."/>
            <person name="Botchan M.R."/>
            <person name="Bouck J."/>
            <person name="Brokstein P."/>
            <person name="Brottier P."/>
            <person name="Burtis K.C."/>
            <person name="Busam D.A."/>
            <person name="Butler H."/>
            <person name="Cadieu E."/>
            <person name="Center A."/>
            <person name="Chandra I."/>
            <person name="Cherry J.M."/>
            <person name="Cawley S."/>
            <person name="Dahlke C."/>
            <person name="Davenport L.B."/>
            <person name="Davies P."/>
            <person name="de Pablos B."/>
            <person name="Delcher A."/>
            <person name="Deng Z."/>
            <person name="Mays A.D."/>
            <person name="Dew I."/>
            <person name="Dietz S.M."/>
            <person name="Dodson K."/>
            <person name="Doup L.E."/>
            <person name="Downes M."/>
            <person name="Dugan-Rocha S."/>
            <person name="Dunkov B.C."/>
            <person name="Dunn P."/>
            <person name="Durbin K.J."/>
            <person name="Evangelista C.C."/>
            <person name="Ferraz C."/>
            <person name="Ferriera S."/>
            <person name="Fleischmann W."/>
            <person name="Fosler C."/>
            <person name="Gabrielian A.E."/>
            <person name="Garg N.S."/>
            <person name="Gelbart W.M."/>
            <person name="Glasser K."/>
            <person name="Glodek A."/>
            <person name="Gong F."/>
            <person name="Gorrell J.H."/>
            <person name="Gu Z."/>
            <person name="Guan P."/>
            <person name="Harris M."/>
            <person name="Harris N.L."/>
            <person name="Harvey D.A."/>
            <person name="Heiman T.J."/>
            <person name="Hernandez J.R."/>
            <person name="Houck J."/>
            <person name="Hostin D."/>
            <person name="Houston K.A."/>
            <person name="Howland T.J."/>
            <person name="Wei M.-H."/>
            <person name="Ibegwam C."/>
            <person name="Jalali M."/>
            <person name="Kalush F."/>
            <person name="Karpen G.H."/>
            <person name="Ke Z."/>
            <person name="Kennison J.A."/>
            <person name="Ketchum K.A."/>
            <person name="Kimmel B.E."/>
            <person name="Kodira C.D."/>
            <person name="Kraft C.L."/>
            <person name="Kravitz S."/>
            <person name="Kulp D."/>
            <person name="Lai Z."/>
            <person name="Lasko P."/>
            <person name="Lei Y."/>
            <person name="Levitsky A.A."/>
            <person name="Li J.H."/>
            <person name="Li Z."/>
            <person name="Liang Y."/>
            <person name="Lin X."/>
            <person name="Liu X."/>
            <person name="Mattei B."/>
            <person name="McIntosh T.C."/>
            <person name="McLeod M.P."/>
            <person name="McPherson D."/>
            <person name="Merkulov G."/>
            <person name="Milshina N.V."/>
            <person name="Mobarry C."/>
            <person name="Morris J."/>
            <person name="Moshrefi A."/>
            <person name="Mount S.M."/>
            <person name="Moy M."/>
            <person name="Murphy B."/>
            <person name="Murphy L."/>
            <person name="Muzny D.M."/>
            <person name="Nelson D.L."/>
            <person name="Nelson D.R."/>
            <person name="Nelson K.A."/>
            <person name="Nixon K."/>
            <person name="Nusskern D.R."/>
            <person name="Pacleb J.M."/>
            <person name="Palazzolo M."/>
            <person name="Pittman G.S."/>
            <person name="Pan S."/>
            <person name="Pollard J."/>
            <person name="Puri V."/>
            <person name="Reese M.G."/>
            <person name="Reinert K."/>
            <person name="Remington K."/>
            <person name="Saunders R.D.C."/>
            <person name="Scheeler F."/>
            <person name="Shen H."/>
            <person name="Shue B.C."/>
            <person name="Siden-Kiamos I."/>
            <person name="Simpson M."/>
            <person name="Skupski M.P."/>
            <person name="Smith T.J."/>
            <person name="Spier E."/>
            <person name="Spradling A.C."/>
            <person name="Stapleton M."/>
            <person name="Strong R."/>
            <person name="Sun E."/>
            <person name="Svirskas R."/>
            <person name="Tector C."/>
            <person name="Turner R."/>
            <person name="Venter E."/>
            <person name="Wang A.H."/>
            <person name="Wang X."/>
            <person name="Wang Z.-Y."/>
            <person name="Wassarman D.A."/>
            <person name="Weinstock G.M."/>
            <person name="Weissenbach J."/>
            <person name="Williams S.M."/>
            <person name="Woodage T."/>
            <person name="Worley K.C."/>
            <person name="Wu D."/>
            <person name="Yang S."/>
            <person name="Yao Q.A."/>
            <person name="Ye J."/>
            <person name="Yeh R.-F."/>
            <person name="Zaveri J.S."/>
            <person name="Zhan M."/>
            <person name="Zhang G."/>
            <person name="Zhao Q."/>
            <person name="Zheng L."/>
            <person name="Zheng X.H."/>
            <person name="Zhong F.N."/>
            <person name="Zhong W."/>
            <person name="Zhou X."/>
            <person name="Zhu S.C."/>
            <person name="Zhu X."/>
            <person name="Smith H.O."/>
            <person name="Gibbs R.A."/>
            <person name="Myers E.W."/>
            <person name="Rubin G.M."/>
            <person name="Venter J.C."/>
        </authorList>
    </citation>
    <scope>NUCLEOTIDE SEQUENCE [LARGE SCALE GENOMIC DNA]</scope>
    <source>
        <strain>Berkeley</strain>
    </source>
</reference>
<reference evidence="3" key="2">
    <citation type="journal article" date="2002" name="Genome Biol.">
        <title>Annotation of the Drosophila melanogaster euchromatic genome: a systematic review.</title>
        <authorList>
            <person name="Misra S."/>
            <person name="Crosby M.A."/>
            <person name="Mungall C.J."/>
            <person name="Matthews B.B."/>
            <person name="Campbell K.S."/>
            <person name="Hradecky P."/>
            <person name="Huang Y."/>
            <person name="Kaminker J.S."/>
            <person name="Millburn G.H."/>
            <person name="Prochnik S.E."/>
            <person name="Smith C.D."/>
            <person name="Tupy J.L."/>
            <person name="Whitfield E.J."/>
            <person name="Bayraktaroglu L."/>
            <person name="Berman B.P."/>
            <person name="Bettencourt B.R."/>
            <person name="Celniker S.E."/>
            <person name="de Grey A.D.N.J."/>
            <person name="Drysdale R.A."/>
            <person name="Harris N.L."/>
            <person name="Richter J."/>
            <person name="Russo S."/>
            <person name="Schroeder A.J."/>
            <person name="Shu S.Q."/>
            <person name="Stapleton M."/>
            <person name="Yamada C."/>
            <person name="Ashburner M."/>
            <person name="Gelbart W.M."/>
            <person name="Rubin G.M."/>
            <person name="Lewis S.E."/>
        </authorList>
    </citation>
    <scope>GENOME REANNOTATION</scope>
    <source>
        <strain>Berkeley</strain>
    </source>
</reference>
<reference evidence="3" key="3">
    <citation type="submission" date="2000-02" db="EMBL/GenBank/DDBJ databases">
        <authorList>
            <person name="Da Lage J.-L."/>
        </authorList>
    </citation>
    <scope>NUCLEOTIDE SEQUENCE [GENOMIC DNA] OF 526-1302</scope>
    <source>
        <strain>Canton-S</strain>
    </source>
</reference>
<sequence>MPEALILPGMADAEPDLSTFENKTGLAEDMKFLASMPELCDVTFLVGDTREPVCAVKAVLASRSRVFAKMLYAAPSPQRKRETSTKENKLRLFLKRSSEPLLNLQNAAQQRTGYTQQLAPIPEPSGQQHQTLIIEEFEPDVFRQLIEYIHTGCVTLQPRTLLGVMNAADYYGLEELRRACAGFVQCCINVDTVCALLASAERYIQYKCTKTLVQKVLEFVDEHGTEVLNLGSFTLLPQHVVRLILAREELRADEFTKFQAALMWSKKYYDNNPNIDIKEILGTFCEYIQFHKIPANVLMREIHPLNLVPYAIIMNALAYQADPESIDPGKLSPNSSRQHHRHRHHHQSLPKIRKAKSQSFRTRRSPSERRSPNNAPNLTLNTSLTSGNGEKKRSPLTPKSPVMPVPESKSPGSSSQKTPTSLSRQGTLRASNRRKNSGQLSISLGTQGRRSPVGLNDRSPQGRRSPLFPSSGLRSPNDPMTSPTVRSPTGEPRRSSPTFSVHTQERRSPLGAVAPTDFGCQFGVPGTRRSPTSTVHVQDMATEPEEAGFVGLKRPSISLFTPIYFASEKRSPMGPIPPITVSNPAETYKSAEREREAAEAAAREKEKEKEKEAAQPQEKKSVMREILAFVRKPSKHLSSRTNRFANAFTRAESGSSGGPLIRQSTFSASPAASSTAAKSAVQKQMSEVGFEPKISQKFTHYAKMSLRLRRSTKRDDEEKEKQKQSSASGSKRPSADLSQTNADQQVGGSSDELPFELANVHFEKVGESYIKHERLRELQEPEVVKEEDTEKDAEAEVEVEQTDAAMAQFVEEVTNSLKVVALNGEGGTAAVHHFTRRSESREPIEPRISEERESDSNDLMIPDDMRAELVEILKAYPPEPVYVNLQALRRETEDADLAIAQAEAAALAAAEPAKKPLQCPTIEFEPPSRRSSFDPPRSPFLEQLRSPGVDTETDLINLQRLDSGGDSFELVESKWSKSSRGESSFDCPYSSRDTSFDVSISRYQSTSYEDQTSSFEIVDTDEKGQGRRAVDLRKSSIELVDAETFQRSGSSCGGRKSSLETHFDYTPTEGGGRSPSLPFPAMSKKQRTENFRQLHVSQFSAFSRARSPLSQQTSSNYSSRDSYDSSGSYPHGYGYPPEPQRSPYGDPSRKHFPLTVRQKGEEEREVRTFLCTDQRCASIFEPRPSSVLTQQLSTGSMSTPSGYTNGTPRIPGAAPVGPVPLPHPSAPLSSCGFSSGSEFEPPSPRRAASASPKHTFTFRIVMKKVDSSPEALCPERHRSRIIDRYRRRDSRRKRIHDAGKSF</sequence>
<dbReference type="EMBL" id="AE013599">
    <property type="protein sequence ID" value="AAF57972.2"/>
    <property type="molecule type" value="Genomic_DNA"/>
</dbReference>
<dbReference type="EMBL" id="AF022713">
    <property type="protein sequence ID" value="AAD09150.2"/>
    <property type="molecule type" value="Genomic_DNA"/>
</dbReference>
<dbReference type="RefSeq" id="NP_725599.2">
    <property type="nucleotide sequence ID" value="NM_166186.3"/>
</dbReference>
<dbReference type="BioGRID" id="62574">
    <property type="interactions" value="1"/>
</dbReference>
<dbReference type="IntAct" id="O61366">
    <property type="interactions" value="4"/>
</dbReference>
<dbReference type="STRING" id="7227.FBpp0086255"/>
<dbReference type="GlyGen" id="O61366">
    <property type="glycosylation" value="2 sites"/>
</dbReference>
<dbReference type="PaxDb" id="7227-FBpp0086255"/>
<dbReference type="EnsemblMetazoa" id="FBtr0087109">
    <property type="protein sequence ID" value="FBpp0086255"/>
    <property type="gene ID" value="FBgn0024232"/>
</dbReference>
<dbReference type="GeneID" id="36862"/>
<dbReference type="KEGG" id="dme:Dmel_CG18471"/>
<dbReference type="UCSC" id="CG18471-RA">
    <property type="organism name" value="d. melanogaster"/>
</dbReference>
<dbReference type="AGR" id="FB:FBgn0024232"/>
<dbReference type="CTD" id="36862"/>
<dbReference type="FlyBase" id="FBgn0024232">
    <property type="gene designation" value="gprs"/>
</dbReference>
<dbReference type="VEuPathDB" id="VectorBase:FBgn0024232"/>
<dbReference type="eggNOG" id="KOG4350">
    <property type="taxonomic scope" value="Eukaryota"/>
</dbReference>
<dbReference type="GeneTree" id="ENSGT00950000182983"/>
<dbReference type="HOGENOM" id="CLU_267779_0_0_1"/>
<dbReference type="InParanoid" id="O61366"/>
<dbReference type="OrthoDB" id="6359816at2759"/>
<dbReference type="PhylomeDB" id="O61366"/>
<dbReference type="BioGRID-ORCS" id="36862">
    <property type="hits" value="0 hits in 1 CRISPR screen"/>
</dbReference>
<dbReference type="ChiTaRS" id="gprs">
    <property type="organism name" value="fly"/>
</dbReference>
<dbReference type="GenomeRNAi" id="36862"/>
<dbReference type="PRO" id="PR:O61366"/>
<dbReference type="Proteomes" id="UP000000803">
    <property type="component" value="Chromosome 2R"/>
</dbReference>
<dbReference type="Bgee" id="FBgn0024232">
    <property type="expression patterns" value="Expressed in transmedullary neuron Tm2 (Drosophila) in insect head and 123 other cell types or tissues"/>
</dbReference>
<dbReference type="ExpressionAtlas" id="O61366">
    <property type="expression patterns" value="baseline and differential"/>
</dbReference>
<dbReference type="CDD" id="cd18507">
    <property type="entry name" value="BACK_GPRS_like"/>
    <property type="match status" value="1"/>
</dbReference>
<dbReference type="CDD" id="cd18294">
    <property type="entry name" value="BTB_POZ_BTBD19"/>
    <property type="match status" value="1"/>
</dbReference>
<dbReference type="Gene3D" id="1.25.40.420">
    <property type="match status" value="1"/>
</dbReference>
<dbReference type="Gene3D" id="3.30.710.10">
    <property type="entry name" value="Potassium Channel Kv1.1, Chain A"/>
    <property type="match status" value="1"/>
</dbReference>
<dbReference type="InterPro" id="IPR011705">
    <property type="entry name" value="BACK"/>
</dbReference>
<dbReference type="InterPro" id="IPR051481">
    <property type="entry name" value="BTB-POZ/Galectin-3-binding"/>
</dbReference>
<dbReference type="InterPro" id="IPR000210">
    <property type="entry name" value="BTB/POZ_dom"/>
</dbReference>
<dbReference type="InterPro" id="IPR011333">
    <property type="entry name" value="SKP1/BTB/POZ_sf"/>
</dbReference>
<dbReference type="PANTHER" id="PTHR24410">
    <property type="entry name" value="HL07962P-RELATED"/>
    <property type="match status" value="1"/>
</dbReference>
<dbReference type="PANTHER" id="PTHR24410:SF46">
    <property type="entry name" value="SERINE-ENRICHED PROTEIN"/>
    <property type="match status" value="1"/>
</dbReference>
<dbReference type="Pfam" id="PF07707">
    <property type="entry name" value="BACK"/>
    <property type="match status" value="1"/>
</dbReference>
<dbReference type="Pfam" id="PF00651">
    <property type="entry name" value="BTB"/>
    <property type="match status" value="2"/>
</dbReference>
<dbReference type="SMART" id="SM00875">
    <property type="entry name" value="BACK"/>
    <property type="match status" value="1"/>
</dbReference>
<dbReference type="SMART" id="SM00225">
    <property type="entry name" value="BTB"/>
    <property type="match status" value="1"/>
</dbReference>
<dbReference type="SUPFAM" id="SSF54695">
    <property type="entry name" value="POZ domain"/>
    <property type="match status" value="1"/>
</dbReference>
<dbReference type="PROSITE" id="PS50097">
    <property type="entry name" value="BTB"/>
    <property type="match status" value="1"/>
</dbReference>